<gene>
    <name evidence="1" type="primary">groEL1</name>
    <name evidence="1" type="synonym">groL1</name>
    <name type="ordered locus">Bcep18194_B2616</name>
</gene>
<evidence type="ECO:0000255" key="1">
    <source>
        <dbReference type="HAMAP-Rule" id="MF_00600"/>
    </source>
</evidence>
<evidence type="ECO:0000256" key="2">
    <source>
        <dbReference type="SAM" id="MobiDB-lite"/>
    </source>
</evidence>
<proteinExistence type="inferred from homology"/>
<comment type="function">
    <text evidence="1">Together with its co-chaperonin GroES, plays an essential role in assisting protein folding. The GroEL-GroES system forms a nano-cage that allows encapsulation of the non-native substrate proteins and provides a physical environment optimized to promote and accelerate protein folding.</text>
</comment>
<comment type="catalytic activity">
    <reaction evidence="1">
        <text>ATP + H2O + a folded polypeptide = ADP + phosphate + an unfolded polypeptide.</text>
        <dbReference type="EC" id="5.6.1.7"/>
    </reaction>
</comment>
<comment type="subunit">
    <text evidence="1">Forms a cylinder of 14 subunits composed of two heptameric rings stacked back-to-back. Interacts with the co-chaperonin GroES.</text>
</comment>
<comment type="subcellular location">
    <subcellularLocation>
        <location evidence="1">Cytoplasm</location>
    </subcellularLocation>
</comment>
<comment type="similarity">
    <text evidence="1">Belongs to the chaperonin (HSP60) family.</text>
</comment>
<protein>
    <recommendedName>
        <fullName evidence="1">Chaperonin GroEL 1</fullName>
        <ecNumber evidence="1">5.6.1.7</ecNumber>
    </recommendedName>
    <alternativeName>
        <fullName evidence="1">60 kDa chaperonin 1</fullName>
    </alternativeName>
    <alternativeName>
        <fullName evidence="1">Chaperonin-60 1</fullName>
        <shortName evidence="1">Cpn60 1</shortName>
    </alternativeName>
</protein>
<sequence>MAAKEIIFSDVARAKLTEGVNILANAVKVTLGPKGRNVVLERSFGAPVVTKDGVSVAKEIELADKLQNIGAQLVKEVASRTSDAAGDGTTTATVLAQAIVREGQKYVAAGLNPLDLKRGIDKAVAAAVDELKKISRPTTTSKEIAQVATISANGEESIGQRIAEAIDRVGKEGVITVEDGKSLADELDVVEGLQFDRGYLSPYFINNPDKQIAEIESPYILLHDKKISNIRDLLPVLEQVAKSGRPLLIIAEDVEGEALATLVVNNIRGILKTVAVKAPGFGDRRKALLEDIAILTGGQVIAEETGLTLEKATLAELGQAKRIEVGKENTTVIDGAGDAKNIEARVKQIRVQIDEATSDYDREKLQERVAKLAGGVAVIKVGGATEIEVKEKKDRVDDALHATRAAVEEGIVPGGGVALIRVRQAIRELQGVNADQNAGIKIVLRALEEPLRQIVTNAGEEASVVVAKVAEGSGNFGYNAQTGVYGDLVESGVLDPTKVTRTALQNAASVAGLLLTTDATVFEAPKDAAPTAAPGGPGAGGPGFDF</sequence>
<dbReference type="EC" id="5.6.1.7" evidence="1"/>
<dbReference type="EMBL" id="CP000152">
    <property type="protein sequence ID" value="ABB12727.1"/>
    <property type="molecule type" value="Genomic_DNA"/>
</dbReference>
<dbReference type="RefSeq" id="WP_011356208.1">
    <property type="nucleotide sequence ID" value="NC_007511.1"/>
</dbReference>
<dbReference type="SMR" id="Q391Y9"/>
<dbReference type="GeneID" id="45098934"/>
<dbReference type="KEGG" id="bur:Bcep18194_B2616"/>
<dbReference type="PATRIC" id="fig|482957.22.peg.6412"/>
<dbReference type="HOGENOM" id="CLU_016503_3_0_4"/>
<dbReference type="Proteomes" id="UP000002705">
    <property type="component" value="Chromosome 2"/>
</dbReference>
<dbReference type="GO" id="GO:0005737">
    <property type="term" value="C:cytoplasm"/>
    <property type="evidence" value="ECO:0007669"/>
    <property type="project" value="UniProtKB-SubCell"/>
</dbReference>
<dbReference type="GO" id="GO:0005524">
    <property type="term" value="F:ATP binding"/>
    <property type="evidence" value="ECO:0007669"/>
    <property type="project" value="UniProtKB-UniRule"/>
</dbReference>
<dbReference type="GO" id="GO:0140662">
    <property type="term" value="F:ATP-dependent protein folding chaperone"/>
    <property type="evidence" value="ECO:0007669"/>
    <property type="project" value="InterPro"/>
</dbReference>
<dbReference type="GO" id="GO:0016853">
    <property type="term" value="F:isomerase activity"/>
    <property type="evidence" value="ECO:0007669"/>
    <property type="project" value="UniProtKB-KW"/>
</dbReference>
<dbReference type="GO" id="GO:0051082">
    <property type="term" value="F:unfolded protein binding"/>
    <property type="evidence" value="ECO:0007669"/>
    <property type="project" value="UniProtKB-UniRule"/>
</dbReference>
<dbReference type="GO" id="GO:0042026">
    <property type="term" value="P:protein refolding"/>
    <property type="evidence" value="ECO:0007669"/>
    <property type="project" value="UniProtKB-UniRule"/>
</dbReference>
<dbReference type="CDD" id="cd03344">
    <property type="entry name" value="GroEL"/>
    <property type="match status" value="1"/>
</dbReference>
<dbReference type="FunFam" id="3.50.7.10:FF:000001">
    <property type="entry name" value="60 kDa chaperonin"/>
    <property type="match status" value="1"/>
</dbReference>
<dbReference type="Gene3D" id="3.50.7.10">
    <property type="entry name" value="GroEL"/>
    <property type="match status" value="1"/>
</dbReference>
<dbReference type="Gene3D" id="1.10.560.10">
    <property type="entry name" value="GroEL-like equatorial domain"/>
    <property type="match status" value="1"/>
</dbReference>
<dbReference type="Gene3D" id="3.30.260.10">
    <property type="entry name" value="TCP-1-like chaperonin intermediate domain"/>
    <property type="match status" value="1"/>
</dbReference>
<dbReference type="HAMAP" id="MF_00600">
    <property type="entry name" value="CH60"/>
    <property type="match status" value="1"/>
</dbReference>
<dbReference type="InterPro" id="IPR018370">
    <property type="entry name" value="Chaperonin_Cpn60_CS"/>
</dbReference>
<dbReference type="InterPro" id="IPR001844">
    <property type="entry name" value="Cpn60/GroEL"/>
</dbReference>
<dbReference type="InterPro" id="IPR002423">
    <property type="entry name" value="Cpn60/GroEL/TCP-1"/>
</dbReference>
<dbReference type="InterPro" id="IPR027409">
    <property type="entry name" value="GroEL-like_apical_dom_sf"/>
</dbReference>
<dbReference type="InterPro" id="IPR027413">
    <property type="entry name" value="GROEL-like_equatorial_sf"/>
</dbReference>
<dbReference type="InterPro" id="IPR027410">
    <property type="entry name" value="TCP-1-like_intermed_sf"/>
</dbReference>
<dbReference type="NCBIfam" id="TIGR02348">
    <property type="entry name" value="GroEL"/>
    <property type="match status" value="1"/>
</dbReference>
<dbReference type="NCBIfam" id="NF000592">
    <property type="entry name" value="PRK00013.1"/>
    <property type="match status" value="1"/>
</dbReference>
<dbReference type="NCBIfam" id="NF009487">
    <property type="entry name" value="PRK12849.1"/>
    <property type="match status" value="1"/>
</dbReference>
<dbReference type="NCBIfam" id="NF009488">
    <property type="entry name" value="PRK12850.1"/>
    <property type="match status" value="1"/>
</dbReference>
<dbReference type="NCBIfam" id="NF009489">
    <property type="entry name" value="PRK12851.1"/>
    <property type="match status" value="1"/>
</dbReference>
<dbReference type="PANTHER" id="PTHR45633">
    <property type="entry name" value="60 KDA HEAT SHOCK PROTEIN, MITOCHONDRIAL"/>
    <property type="match status" value="1"/>
</dbReference>
<dbReference type="Pfam" id="PF00118">
    <property type="entry name" value="Cpn60_TCP1"/>
    <property type="match status" value="1"/>
</dbReference>
<dbReference type="PRINTS" id="PR00298">
    <property type="entry name" value="CHAPERONIN60"/>
</dbReference>
<dbReference type="SUPFAM" id="SSF52029">
    <property type="entry name" value="GroEL apical domain-like"/>
    <property type="match status" value="1"/>
</dbReference>
<dbReference type="SUPFAM" id="SSF48592">
    <property type="entry name" value="GroEL equatorial domain-like"/>
    <property type="match status" value="1"/>
</dbReference>
<dbReference type="SUPFAM" id="SSF54849">
    <property type="entry name" value="GroEL-intermediate domain like"/>
    <property type="match status" value="1"/>
</dbReference>
<dbReference type="PROSITE" id="PS00296">
    <property type="entry name" value="CHAPERONINS_CPN60"/>
    <property type="match status" value="1"/>
</dbReference>
<keyword id="KW-0067">ATP-binding</keyword>
<keyword id="KW-0143">Chaperone</keyword>
<keyword id="KW-0963">Cytoplasm</keyword>
<keyword id="KW-0413">Isomerase</keyword>
<keyword id="KW-0547">Nucleotide-binding</keyword>
<name>CH601_BURL3</name>
<feature type="chain" id="PRO_0000256883" description="Chaperonin GroEL 1">
    <location>
        <begin position="1"/>
        <end position="546"/>
    </location>
</feature>
<feature type="region of interest" description="Disordered" evidence="2">
    <location>
        <begin position="527"/>
        <end position="546"/>
    </location>
</feature>
<feature type="compositionally biased region" description="Gly residues" evidence="2">
    <location>
        <begin position="535"/>
        <end position="546"/>
    </location>
</feature>
<feature type="binding site" evidence="1">
    <location>
        <begin position="30"/>
        <end position="33"/>
    </location>
    <ligand>
        <name>ATP</name>
        <dbReference type="ChEBI" id="CHEBI:30616"/>
    </ligand>
</feature>
<feature type="binding site" evidence="1">
    <location>
        <position position="51"/>
    </location>
    <ligand>
        <name>ATP</name>
        <dbReference type="ChEBI" id="CHEBI:30616"/>
    </ligand>
</feature>
<feature type="binding site" evidence="1">
    <location>
        <begin position="87"/>
        <end position="91"/>
    </location>
    <ligand>
        <name>ATP</name>
        <dbReference type="ChEBI" id="CHEBI:30616"/>
    </ligand>
</feature>
<feature type="binding site" evidence="1">
    <location>
        <position position="415"/>
    </location>
    <ligand>
        <name>ATP</name>
        <dbReference type="ChEBI" id="CHEBI:30616"/>
    </ligand>
</feature>
<feature type="binding site" evidence="1">
    <location>
        <position position="495"/>
    </location>
    <ligand>
        <name>ATP</name>
        <dbReference type="ChEBI" id="CHEBI:30616"/>
    </ligand>
</feature>
<organism>
    <name type="scientific">Burkholderia lata (strain ATCC 17760 / DSM 23089 / LMG 22485 / NCIMB 9086 / R18194 / 383)</name>
    <dbReference type="NCBI Taxonomy" id="482957"/>
    <lineage>
        <taxon>Bacteria</taxon>
        <taxon>Pseudomonadati</taxon>
        <taxon>Pseudomonadota</taxon>
        <taxon>Betaproteobacteria</taxon>
        <taxon>Burkholderiales</taxon>
        <taxon>Burkholderiaceae</taxon>
        <taxon>Burkholderia</taxon>
        <taxon>Burkholderia cepacia complex</taxon>
    </lineage>
</organism>
<accession>Q391Y9</accession>
<reference key="1">
    <citation type="submission" date="2005-10" db="EMBL/GenBank/DDBJ databases">
        <title>Complete sequence of chromosome 2 of Burkholderia sp. 383.</title>
        <authorList>
            <consortium name="US DOE Joint Genome Institute"/>
            <person name="Copeland A."/>
            <person name="Lucas S."/>
            <person name="Lapidus A."/>
            <person name="Barry K."/>
            <person name="Detter J.C."/>
            <person name="Glavina T."/>
            <person name="Hammon N."/>
            <person name="Israni S."/>
            <person name="Pitluck S."/>
            <person name="Chain P."/>
            <person name="Malfatti S."/>
            <person name="Shin M."/>
            <person name="Vergez L."/>
            <person name="Schmutz J."/>
            <person name="Larimer F."/>
            <person name="Land M."/>
            <person name="Kyrpides N."/>
            <person name="Lykidis A."/>
            <person name="Richardson P."/>
        </authorList>
    </citation>
    <scope>NUCLEOTIDE SEQUENCE [LARGE SCALE GENOMIC DNA]</scope>
    <source>
        <strain>ATCC 17760 / DSM 23089 / LMG 22485 / NCIMB 9086 / R18194 / 383</strain>
    </source>
</reference>